<keyword id="KW-0050">Antiport</keyword>
<keyword id="KW-0472">Membrane</keyword>
<keyword id="KW-0496">Mitochondrion</keyword>
<keyword id="KW-0999">Mitochondrion inner membrane</keyword>
<keyword id="KW-1185">Reference proteome</keyword>
<keyword id="KW-0677">Repeat</keyword>
<keyword id="KW-0812">Transmembrane</keyword>
<keyword id="KW-1133">Transmembrane helix</keyword>
<keyword id="KW-0813">Transport</keyword>
<protein>
    <recommendedName>
        <fullName>ADP,ATP carrier protein 2</fullName>
    </recommendedName>
    <alternativeName>
        <fullName>ADP/ATP translocase 2</fullName>
    </alternativeName>
    <alternativeName>
        <fullName>Adenine nucleotide translocator 2</fullName>
        <shortName>ANT 2</shortName>
    </alternativeName>
</protein>
<proteinExistence type="inferred from homology"/>
<organism>
    <name type="scientific">Anopheles gambiae</name>
    <name type="common">African malaria mosquito</name>
    <dbReference type="NCBI Taxonomy" id="7165"/>
    <lineage>
        <taxon>Eukaryota</taxon>
        <taxon>Metazoa</taxon>
        <taxon>Ecdysozoa</taxon>
        <taxon>Arthropoda</taxon>
        <taxon>Hexapoda</taxon>
        <taxon>Insecta</taxon>
        <taxon>Pterygota</taxon>
        <taxon>Neoptera</taxon>
        <taxon>Endopterygota</taxon>
        <taxon>Diptera</taxon>
        <taxon>Nematocera</taxon>
        <taxon>Culicoidea</taxon>
        <taxon>Culicidae</taxon>
        <taxon>Anophelinae</taxon>
        <taxon>Anopheles</taxon>
    </lineage>
</organism>
<comment type="function">
    <text evidence="1 4">ADP:ATP antiporter that mediates import of ADP into the mitochondrial matrix for ATP synthesis, and export of ATP out to fuel the cell (By similarity). Cycles between the cytoplasmic-open state (c-state) and the matrix-open state (m-state): operates by the alternating access mechanism with a single substrate-binding site intermittently exposed to either the cytosolic (c-state) or matrix (m-state) side of the inner mitochondrial membrane (By similarity).</text>
</comment>
<comment type="catalytic activity">
    <reaction evidence="4">
        <text>ADP(in) + ATP(out) = ADP(out) + ATP(in)</text>
        <dbReference type="Rhea" id="RHEA:34999"/>
        <dbReference type="ChEBI" id="CHEBI:30616"/>
        <dbReference type="ChEBI" id="CHEBI:456216"/>
    </reaction>
    <physiologicalReaction direction="left-to-right" evidence="4">
        <dbReference type="Rhea" id="RHEA:35000"/>
    </physiologicalReaction>
</comment>
<comment type="activity regulation">
    <text evidence="1">The matrix-open state (m-state) is inhibited by the membrane-permeable bongkrekic acid (BKA). The cytoplasmic-open state (c-state) is inhibited by the membrane-impermeable toxic inhibitor carboxyatractyloside (CATR).</text>
</comment>
<comment type="subunit">
    <text evidence="1 2">Monomer.</text>
</comment>
<comment type="subcellular location">
    <subcellularLocation>
        <location evidence="5">Mitochondrion inner membrane</location>
        <topology evidence="6">Multi-pass membrane protein</topology>
    </subcellularLocation>
</comment>
<comment type="domain">
    <text evidence="2">The transmembrane helices are not perpendicular to the plane of the membrane, but cross the membrane at an angle. Odd-numbered transmembrane helices exhibit a sharp kink, due to the presence of a conserved proline residue.</text>
</comment>
<comment type="similarity">
    <text evidence="7">Belongs to the mitochondrial carrier (TC 2.A.29) family.</text>
</comment>
<reference evidence="8" key="1">
    <citation type="journal article" date="2002" name="Science">
        <title>The genome sequence of the malaria mosquito Anopheles gambiae.</title>
        <authorList>
            <person name="Holt R.A."/>
            <person name="Subramanian G.M."/>
            <person name="Halpern A."/>
            <person name="Sutton G.G."/>
            <person name="Charlab R."/>
            <person name="Nusskern D.R."/>
            <person name="Wincker P."/>
            <person name="Clark A.G."/>
            <person name="Ribeiro J.M.C."/>
            <person name="Wides R."/>
            <person name="Salzberg S.L."/>
            <person name="Loftus B.J."/>
            <person name="Yandell M.D."/>
            <person name="Majoros W.H."/>
            <person name="Rusch D.B."/>
            <person name="Lai Z."/>
            <person name="Kraft C.L."/>
            <person name="Abril J.F."/>
            <person name="Anthouard V."/>
            <person name="Arensburger P."/>
            <person name="Atkinson P.W."/>
            <person name="Baden H."/>
            <person name="de Berardinis V."/>
            <person name="Baldwin D."/>
            <person name="Benes V."/>
            <person name="Biedler J."/>
            <person name="Blass C."/>
            <person name="Bolanos R."/>
            <person name="Boscus D."/>
            <person name="Barnstead M."/>
            <person name="Cai S."/>
            <person name="Center A."/>
            <person name="Chaturverdi K."/>
            <person name="Christophides G.K."/>
            <person name="Chrystal M.A.M."/>
            <person name="Clamp M."/>
            <person name="Cravchik A."/>
            <person name="Curwen V."/>
            <person name="Dana A."/>
            <person name="Delcher A."/>
            <person name="Dew I."/>
            <person name="Evans C.A."/>
            <person name="Flanigan M."/>
            <person name="Grundschober-Freimoser A."/>
            <person name="Friedli L."/>
            <person name="Gu Z."/>
            <person name="Guan P."/>
            <person name="Guigo R."/>
            <person name="Hillenmeyer M.E."/>
            <person name="Hladun S.L."/>
            <person name="Hogan J.R."/>
            <person name="Hong Y.S."/>
            <person name="Hoover J."/>
            <person name="Jaillon O."/>
            <person name="Ke Z."/>
            <person name="Kodira C.D."/>
            <person name="Kokoza E."/>
            <person name="Koutsos A."/>
            <person name="Letunic I."/>
            <person name="Levitsky A.A."/>
            <person name="Liang Y."/>
            <person name="Lin J.-J."/>
            <person name="Lobo N.F."/>
            <person name="Lopez J.R."/>
            <person name="Malek J.A."/>
            <person name="McIntosh T.C."/>
            <person name="Meister S."/>
            <person name="Miller J.R."/>
            <person name="Mobarry C."/>
            <person name="Mongin E."/>
            <person name="Murphy S.D."/>
            <person name="O'Brochta D.A."/>
            <person name="Pfannkoch C."/>
            <person name="Qi R."/>
            <person name="Regier M.A."/>
            <person name="Remington K."/>
            <person name="Shao H."/>
            <person name="Sharakhova M.V."/>
            <person name="Sitter C.D."/>
            <person name="Shetty J."/>
            <person name="Smith T.J."/>
            <person name="Strong R."/>
            <person name="Sun J."/>
            <person name="Thomasova D."/>
            <person name="Ton L.Q."/>
            <person name="Topalis P."/>
            <person name="Tu Z.J."/>
            <person name="Unger M.F."/>
            <person name="Walenz B."/>
            <person name="Wang A.H."/>
            <person name="Wang J."/>
            <person name="Wang M."/>
            <person name="Wang X."/>
            <person name="Woodford K.J."/>
            <person name="Wortman J.R."/>
            <person name="Wu M."/>
            <person name="Yao A."/>
            <person name="Zdobnov E.M."/>
            <person name="Zhang H."/>
            <person name="Zhao Q."/>
            <person name="Zhao S."/>
            <person name="Zhu S.C."/>
            <person name="Zhimulev I."/>
            <person name="Coluzzi M."/>
            <person name="della Torre A."/>
            <person name="Roth C.W."/>
            <person name="Louis C."/>
            <person name="Kalush F."/>
            <person name="Mural R.J."/>
            <person name="Myers E.W."/>
            <person name="Adams M.D."/>
            <person name="Smith H.O."/>
            <person name="Broder S."/>
            <person name="Gardner M.J."/>
            <person name="Fraser C.M."/>
            <person name="Birney E."/>
            <person name="Bork P."/>
            <person name="Brey P.T."/>
            <person name="Venter J.C."/>
            <person name="Weissenbach J."/>
            <person name="Kafatos F.C."/>
            <person name="Collins F.H."/>
            <person name="Hoffman S.L."/>
        </authorList>
    </citation>
    <scope>NUCLEOTIDE SEQUENCE [LARGE SCALE GENOMIC DNA]</scope>
    <source>
        <strain evidence="8">PEST</strain>
    </source>
</reference>
<dbReference type="EMBL" id="AAAB01008859">
    <property type="protein sequence ID" value="EAA08224.3"/>
    <property type="molecule type" value="Genomic_DNA"/>
</dbReference>
<dbReference type="RefSeq" id="XP_003436097.1">
    <property type="nucleotide sequence ID" value="XM_003436049.1"/>
</dbReference>
<dbReference type="RefSeq" id="XP_312601.2">
    <property type="nucleotide sequence ID" value="XM_312601.5"/>
</dbReference>
<dbReference type="SMR" id="Q7PQV7"/>
<dbReference type="FunCoup" id="Q7PQV7">
    <property type="interactions" value="1366"/>
</dbReference>
<dbReference type="STRING" id="7165.Q7PQV7"/>
<dbReference type="PaxDb" id="7165-AGAP002358-PC"/>
<dbReference type="EnsemblMetazoa" id="AGAP002358-RA">
    <property type="protein sequence ID" value="AGAP002358-PA"/>
    <property type="gene ID" value="AGAP002358"/>
</dbReference>
<dbReference type="EnsemblMetazoa" id="AGAP002358-RB">
    <property type="protein sequence ID" value="AGAP002358-PB"/>
    <property type="gene ID" value="AGAP002358"/>
</dbReference>
<dbReference type="EnsemblMetazoa" id="AGAP002358-RC">
    <property type="protein sequence ID" value="AGAP002358-PC"/>
    <property type="gene ID" value="AGAP002358"/>
</dbReference>
<dbReference type="GeneID" id="1273606"/>
<dbReference type="KEGG" id="aga:1273606"/>
<dbReference type="VEuPathDB" id="VectorBase:AGAMI1_004643"/>
<dbReference type="VEuPathDB" id="VectorBase:AGAP002358"/>
<dbReference type="eggNOG" id="KOG0749">
    <property type="taxonomic scope" value="Eukaryota"/>
</dbReference>
<dbReference type="HOGENOM" id="CLU_015166_12_0_1"/>
<dbReference type="InParanoid" id="Q7PQV7"/>
<dbReference type="OMA" id="CWATIYK"/>
<dbReference type="PhylomeDB" id="Q7PQV7"/>
<dbReference type="Proteomes" id="UP000007062">
    <property type="component" value="Chromosome 2R"/>
</dbReference>
<dbReference type="GO" id="GO:0005743">
    <property type="term" value="C:mitochondrial inner membrane"/>
    <property type="evidence" value="ECO:0007669"/>
    <property type="project" value="UniProtKB-SubCell"/>
</dbReference>
<dbReference type="GO" id="GO:0005471">
    <property type="term" value="F:ATP:ADP antiporter activity"/>
    <property type="evidence" value="ECO:0007669"/>
    <property type="project" value="InterPro"/>
</dbReference>
<dbReference type="GO" id="GO:0140021">
    <property type="term" value="P:mitochondrial ADP transmembrane transport"/>
    <property type="evidence" value="ECO:0007669"/>
    <property type="project" value="InterPro"/>
</dbReference>
<dbReference type="GO" id="GO:1990544">
    <property type="term" value="P:mitochondrial ATP transmembrane transport"/>
    <property type="evidence" value="ECO:0007669"/>
    <property type="project" value="InterPro"/>
</dbReference>
<dbReference type="GO" id="GO:1901029">
    <property type="term" value="P:negative regulation of mitochondrial outer membrane permeabilization involved in apoptotic signaling pathway"/>
    <property type="evidence" value="ECO:0000318"/>
    <property type="project" value="GO_Central"/>
</dbReference>
<dbReference type="FunFam" id="1.50.40.10:FF:000002">
    <property type="entry name" value="Putative ADP/ATP translocase 2-like"/>
    <property type="match status" value="1"/>
</dbReference>
<dbReference type="Gene3D" id="1.50.40.10">
    <property type="entry name" value="Mitochondrial carrier domain"/>
    <property type="match status" value="1"/>
</dbReference>
<dbReference type="InterPro" id="IPR002113">
    <property type="entry name" value="ADT_euk_type"/>
</dbReference>
<dbReference type="InterPro" id="IPR002067">
    <property type="entry name" value="Mit_carrier"/>
</dbReference>
<dbReference type="InterPro" id="IPR018108">
    <property type="entry name" value="Mitochondrial_sb/sol_carrier"/>
</dbReference>
<dbReference type="InterPro" id="IPR023395">
    <property type="entry name" value="Mt_carrier_dom_sf"/>
</dbReference>
<dbReference type="PANTHER" id="PTHR45635">
    <property type="entry name" value="ADP,ATP CARRIER PROTEIN 1-RELATED-RELATED"/>
    <property type="match status" value="1"/>
</dbReference>
<dbReference type="PANTHER" id="PTHR45635:SF14">
    <property type="entry name" value="ADP_ATP TRANSLOCASE"/>
    <property type="match status" value="1"/>
</dbReference>
<dbReference type="Pfam" id="PF00153">
    <property type="entry name" value="Mito_carr"/>
    <property type="match status" value="3"/>
</dbReference>
<dbReference type="PRINTS" id="PR00927">
    <property type="entry name" value="ADPTRNSLCASE"/>
</dbReference>
<dbReference type="PRINTS" id="PR00926">
    <property type="entry name" value="MITOCARRIER"/>
</dbReference>
<dbReference type="SUPFAM" id="SSF103506">
    <property type="entry name" value="Mitochondrial carrier"/>
    <property type="match status" value="1"/>
</dbReference>
<dbReference type="PROSITE" id="PS50920">
    <property type="entry name" value="SOLCAR"/>
    <property type="match status" value="3"/>
</dbReference>
<evidence type="ECO:0000250" key="1">
    <source>
        <dbReference type="UniProtKB" id="G2QNH0"/>
    </source>
</evidence>
<evidence type="ECO:0000250" key="2">
    <source>
        <dbReference type="UniProtKB" id="P02722"/>
    </source>
</evidence>
<evidence type="ECO:0000250" key="3">
    <source>
        <dbReference type="UniProtKB" id="P12235"/>
    </source>
</evidence>
<evidence type="ECO:0000250" key="4">
    <source>
        <dbReference type="UniProtKB" id="P48962"/>
    </source>
</evidence>
<evidence type="ECO:0000250" key="5">
    <source>
        <dbReference type="UniProtKB" id="Q26365"/>
    </source>
</evidence>
<evidence type="ECO:0000255" key="6"/>
<evidence type="ECO:0000305" key="7"/>
<evidence type="ECO:0000312" key="8">
    <source>
        <dbReference type="EMBL" id="EAA08224.3"/>
    </source>
</evidence>
<feature type="chain" id="PRO_0000232394" description="ADP,ATP carrier protein 2">
    <location>
        <begin position="1"/>
        <end position="300"/>
    </location>
</feature>
<feature type="transmembrane region" description="Helical; Name=1" evidence="2">
    <location>
        <begin position="10"/>
        <end position="39"/>
    </location>
</feature>
<feature type="transmembrane region" description="Helical; Name=2" evidence="2">
    <location>
        <begin position="77"/>
        <end position="101"/>
    </location>
</feature>
<feature type="transmembrane region" description="Helical; Name=3" evidence="2">
    <location>
        <begin position="112"/>
        <end position="132"/>
    </location>
</feature>
<feature type="transmembrane region" description="Helical; Name=4" evidence="2">
    <location>
        <begin position="181"/>
        <end position="201"/>
    </location>
</feature>
<feature type="transmembrane region" description="Helical; Name=5" evidence="2">
    <location>
        <begin position="213"/>
        <end position="233"/>
    </location>
</feature>
<feature type="transmembrane region" description="Helical; Name=6" evidence="2">
    <location>
        <begin position="276"/>
        <end position="293"/>
    </location>
</feature>
<feature type="repeat" description="Solcar 1" evidence="6">
    <location>
        <begin position="8"/>
        <end position="100"/>
    </location>
</feature>
<feature type="repeat" description="Solcar 2" evidence="6">
    <location>
        <begin position="113"/>
        <end position="203"/>
    </location>
</feature>
<feature type="repeat" description="Solcar 3" evidence="6">
    <location>
        <begin position="214"/>
        <end position="299"/>
    </location>
</feature>
<feature type="region of interest" description="Important for transport activity" evidence="3">
    <location>
        <begin position="237"/>
        <end position="242"/>
    </location>
</feature>
<feature type="short sequence motif" description="Nucleotide carrier signature motif" evidence="2">
    <location>
        <begin position="237"/>
        <end position="242"/>
    </location>
</feature>
<feature type="binding site" evidence="2">
    <location>
        <position position="82"/>
    </location>
    <ligand>
        <name>ADP</name>
        <dbReference type="ChEBI" id="CHEBI:456216"/>
    </ligand>
</feature>
<feature type="binding site" evidence="2">
    <location>
        <position position="94"/>
    </location>
    <ligand>
        <name>ADP</name>
        <dbReference type="ChEBI" id="CHEBI:456216"/>
    </ligand>
</feature>
<feature type="binding site" evidence="2">
    <location>
        <position position="237"/>
    </location>
    <ligand>
        <name>ADP</name>
        <dbReference type="ChEBI" id="CHEBI:456216"/>
    </ligand>
</feature>
<sequence>MPGLSDPVAFIKDFAAGGISAAISKTAVAPIERVKLLLQVQHISKQIAEADRYKGMVDCFVRIPREQGFSAFWRGNLANVIRYFPTQALNFAFKDKYKQVFLGGVDKNTQFTRYFIGNLASGGMAGATSLCFVYPLDFARTRLAADVGKGAEAREFKGLGDCISKIFKTDGLVGLYRGFGVSVQGIIIYRAAYFGFYDTARGMLPNPKTTPWYVSWAIAQCVTTVAGIVSYPFDTVRRRMMMQSGRAKSEIVYKGTLHCWATIAKQEGTGAFFKGAFSNVLRGTGGAFVLVLYDEIKKVL</sequence>
<accession>Q7PQV7</accession>
<name>ADT2_ANOGA</name>
<gene>
    <name type="ORF">AGAP002358</name>
</gene>